<accession>Q9AJA7</accession>
<protein>
    <recommendedName>
        <fullName evidence="1">Acyl transferase</fullName>
        <shortName evidence="1">ACT</shortName>
        <ecNumber evidence="1">2.3.1.-</ecNumber>
    </recommendedName>
    <alternativeName>
        <fullName evidence="1">C14ACP-TE</fullName>
    </alternativeName>
    <alternativeName>
        <fullName evidence="1">Myristoyl-ACP-specific thioesterase</fullName>
    </alternativeName>
</protein>
<organism>
    <name type="scientific">Shewanella hanedai</name>
    <name type="common">Alteromonas hanedai</name>
    <dbReference type="NCBI Taxonomy" id="25"/>
    <lineage>
        <taxon>Bacteria</taxon>
        <taxon>Pseudomonadati</taxon>
        <taxon>Pseudomonadota</taxon>
        <taxon>Gammaproteobacteria</taxon>
        <taxon>Alteromonadales</taxon>
        <taxon>Shewanellaceae</taxon>
        <taxon>Shewanella</taxon>
    </lineage>
</organism>
<dbReference type="EC" id="2.3.1.-" evidence="1"/>
<dbReference type="EMBL" id="AB058949">
    <property type="protein sequence ID" value="BAB40795.1"/>
    <property type="molecule type" value="Genomic_DNA"/>
</dbReference>
<dbReference type="RefSeq" id="WP_143563587.1">
    <property type="nucleotide sequence ID" value="NZ_BMPL01000004.1"/>
</dbReference>
<dbReference type="SMR" id="Q9AJA7"/>
<dbReference type="ESTHER" id="sheha-LUXD">
    <property type="family name" value="Thioesterase_acyl-transferase"/>
</dbReference>
<dbReference type="OrthoDB" id="6458549at2"/>
<dbReference type="UniPathway" id="UPA00569"/>
<dbReference type="GO" id="GO:0016747">
    <property type="term" value="F:acyltransferase activity, transferring groups other than amino-acyl groups"/>
    <property type="evidence" value="ECO:0007669"/>
    <property type="project" value="UniProtKB-UniRule"/>
</dbReference>
<dbReference type="GO" id="GO:0008218">
    <property type="term" value="P:bioluminescence"/>
    <property type="evidence" value="ECO:0007669"/>
    <property type="project" value="UniProtKB-UniRule"/>
</dbReference>
<dbReference type="GO" id="GO:0006631">
    <property type="term" value="P:fatty acid metabolic process"/>
    <property type="evidence" value="ECO:0007669"/>
    <property type="project" value="InterPro"/>
</dbReference>
<dbReference type="Gene3D" id="3.40.50.1820">
    <property type="entry name" value="alpha/beta hydrolase"/>
    <property type="match status" value="1"/>
</dbReference>
<dbReference type="HAMAP" id="MF_00774">
    <property type="entry name" value="LuxD"/>
    <property type="match status" value="1"/>
</dbReference>
<dbReference type="InterPro" id="IPR029058">
    <property type="entry name" value="AB_hydrolase_fold"/>
</dbReference>
<dbReference type="InterPro" id="IPR003157">
    <property type="entry name" value="LuxD"/>
</dbReference>
<dbReference type="NCBIfam" id="NF010127">
    <property type="entry name" value="PRK13604.1"/>
    <property type="match status" value="1"/>
</dbReference>
<dbReference type="Pfam" id="PF02273">
    <property type="entry name" value="Acyl_transf_2"/>
    <property type="match status" value="1"/>
</dbReference>
<dbReference type="PIRSF" id="PIRSF009416">
    <property type="entry name" value="LuxD"/>
    <property type="match status" value="1"/>
</dbReference>
<dbReference type="SUPFAM" id="SSF53474">
    <property type="entry name" value="alpha/beta-Hydrolases"/>
    <property type="match status" value="1"/>
</dbReference>
<sequence length="308" mass="34859">MECSNSCLTIDHVIQLDDDKEIRVWETLPKDNTAVRNNTILIASGFARRMDHFAGLAEYLSSNGFHVIRYDSLHHVGLSSGDINEFTMSIGKDSLLIVIEWLKGRGVNKLGLIAASLSARIAYEISNDVDLSFLVTAVGVVNLRDTLERSLKYDYLQLEIEDLPEDLDFEGHNLGSKVFVRDCFKHNWVTLDSTKNKMKNLDIPFIAFTANDDDWVKKAEVLEMMNSISSTKCKLYSLIGSSHDLGENLVVLRNFYQSVTKAAISLDNDSVDLNVEIFEPKFEELTSVTVQERRLKNKIESEILELMN</sequence>
<evidence type="ECO:0000255" key="1">
    <source>
        <dbReference type="HAMAP-Rule" id="MF_00774"/>
    </source>
</evidence>
<keyword id="KW-0012">Acyltransferase</keyword>
<keyword id="KW-0455">Luminescence</keyword>
<keyword id="KW-0808">Transferase</keyword>
<name>LUXD_SHEHA</name>
<comment type="function">
    <text evidence="1">Acyl transferase is part of the fatty acid reductase system required for aldehyde biosynthesis; it produces fatty acids for the luminescent reaction.</text>
</comment>
<comment type="pathway">
    <text evidence="1">Lipid metabolism; fatty acid reduction for biolumincescence.</text>
</comment>
<comment type="similarity">
    <text evidence="1">Belongs to the LuxD family.</text>
</comment>
<proteinExistence type="inferred from homology"/>
<feature type="chain" id="PRO_0000220193" description="Acyl transferase">
    <location>
        <begin position="1"/>
        <end position="308"/>
    </location>
</feature>
<feature type="active site" description="Charge relay system" evidence="1">
    <location>
        <position position="116"/>
    </location>
</feature>
<feature type="active site" description="Charge relay system" evidence="1">
    <location>
        <position position="213"/>
    </location>
</feature>
<feature type="active site" description="Charge relay system" evidence="1">
    <location>
        <position position="243"/>
    </location>
</feature>
<gene>
    <name evidence="1" type="primary">luxD</name>
</gene>
<reference key="1">
    <citation type="submission" date="2001-03" db="EMBL/GenBank/DDBJ databases">
        <title>Identification of the lux genes from Shewanella hanedai.</title>
        <authorList>
            <person name="Zenno S."/>
        </authorList>
    </citation>
    <scope>NUCLEOTIDE SEQUENCE [GENOMIC DNA]</scope>
    <source>
        <strain>ATCC 33224 / DSM 6066 / LMG 19004 / 281</strain>
    </source>
</reference>